<name>PSBA1_SYNS3</name>
<evidence type="ECO:0000255" key="1">
    <source>
        <dbReference type="HAMAP-Rule" id="MF_01379"/>
    </source>
</evidence>
<evidence type="ECO:0000305" key="2"/>
<reference key="1">
    <citation type="journal article" date="2006" name="Proc. Natl. Acad. Sci. U.S.A.">
        <title>Genome sequence of Synechococcus CC9311: insights into adaptation to a coastal environment.</title>
        <authorList>
            <person name="Palenik B."/>
            <person name="Ren Q."/>
            <person name="Dupont C.L."/>
            <person name="Myers G.S."/>
            <person name="Heidelberg J.F."/>
            <person name="Badger J.H."/>
            <person name="Madupu R."/>
            <person name="Nelson W.C."/>
            <person name="Brinkac L.M."/>
            <person name="Dodson R.J."/>
            <person name="Durkin A.S."/>
            <person name="Daugherty S.C."/>
            <person name="Sullivan S.A."/>
            <person name="Khouri H."/>
            <person name="Mohamoud Y."/>
            <person name="Halpin R."/>
            <person name="Paulsen I.T."/>
        </authorList>
    </citation>
    <scope>NUCLEOTIDE SEQUENCE [LARGE SCALE GENOMIC DNA]</scope>
    <source>
        <strain>CC9311</strain>
    </source>
</reference>
<dbReference type="EC" id="1.10.3.9" evidence="1"/>
<dbReference type="EMBL" id="CP000435">
    <property type="protein sequence ID" value="ABI46731.1"/>
    <property type="molecule type" value="Genomic_DNA"/>
</dbReference>
<dbReference type="EMBL" id="CP000435">
    <property type="protein sequence ID" value="ABI47825.1"/>
    <property type="molecule type" value="Genomic_DNA"/>
</dbReference>
<dbReference type="RefSeq" id="WP_011618340.1">
    <property type="nucleotide sequence ID" value="NC_008319.1"/>
</dbReference>
<dbReference type="SMR" id="Q0I7J2"/>
<dbReference type="STRING" id="64471.sync_0368"/>
<dbReference type="KEGG" id="syg:sync_0368"/>
<dbReference type="KEGG" id="syg:sync_2384"/>
<dbReference type="eggNOG" id="ENOG502Z87P">
    <property type="taxonomic scope" value="Bacteria"/>
</dbReference>
<dbReference type="HOGENOM" id="CLU_054206_1_0_3"/>
<dbReference type="OrthoDB" id="505356at2"/>
<dbReference type="Proteomes" id="UP000001961">
    <property type="component" value="Chromosome"/>
</dbReference>
<dbReference type="GO" id="GO:0009523">
    <property type="term" value="C:photosystem II"/>
    <property type="evidence" value="ECO:0007669"/>
    <property type="project" value="UniProtKB-KW"/>
</dbReference>
<dbReference type="GO" id="GO:0031676">
    <property type="term" value="C:plasma membrane-derived thylakoid membrane"/>
    <property type="evidence" value="ECO:0007669"/>
    <property type="project" value="UniProtKB-SubCell"/>
</dbReference>
<dbReference type="GO" id="GO:0016168">
    <property type="term" value="F:chlorophyll binding"/>
    <property type="evidence" value="ECO:0007669"/>
    <property type="project" value="UniProtKB-UniRule"/>
</dbReference>
<dbReference type="GO" id="GO:0045156">
    <property type="term" value="F:electron transporter, transferring electrons within the cyclic electron transport pathway of photosynthesis activity"/>
    <property type="evidence" value="ECO:0007669"/>
    <property type="project" value="InterPro"/>
</dbReference>
<dbReference type="GO" id="GO:0005506">
    <property type="term" value="F:iron ion binding"/>
    <property type="evidence" value="ECO:0007669"/>
    <property type="project" value="UniProtKB-UniRule"/>
</dbReference>
<dbReference type="GO" id="GO:0016682">
    <property type="term" value="F:oxidoreductase activity, acting on diphenols and related substances as donors, oxygen as acceptor"/>
    <property type="evidence" value="ECO:0007669"/>
    <property type="project" value="UniProtKB-UniRule"/>
</dbReference>
<dbReference type="GO" id="GO:0010242">
    <property type="term" value="F:oxygen evolving activity"/>
    <property type="evidence" value="ECO:0007669"/>
    <property type="project" value="UniProtKB-EC"/>
</dbReference>
<dbReference type="GO" id="GO:0009772">
    <property type="term" value="P:photosynthetic electron transport in photosystem II"/>
    <property type="evidence" value="ECO:0007669"/>
    <property type="project" value="InterPro"/>
</dbReference>
<dbReference type="GO" id="GO:0009635">
    <property type="term" value="P:response to herbicide"/>
    <property type="evidence" value="ECO:0007669"/>
    <property type="project" value="UniProtKB-KW"/>
</dbReference>
<dbReference type="FunFam" id="1.20.85.10:FF:000002">
    <property type="entry name" value="Photosystem II protein D1"/>
    <property type="match status" value="1"/>
</dbReference>
<dbReference type="Gene3D" id="1.20.85.10">
    <property type="entry name" value="Photosystem II protein D1-like"/>
    <property type="match status" value="1"/>
</dbReference>
<dbReference type="HAMAP" id="MF_01379">
    <property type="entry name" value="PSII_PsbA_D1"/>
    <property type="match status" value="1"/>
</dbReference>
<dbReference type="InterPro" id="IPR055266">
    <property type="entry name" value="D1/D2"/>
</dbReference>
<dbReference type="InterPro" id="IPR036854">
    <property type="entry name" value="Photo_II_D1/D2_sf"/>
</dbReference>
<dbReference type="InterPro" id="IPR000484">
    <property type="entry name" value="Photo_RC_L/M"/>
</dbReference>
<dbReference type="InterPro" id="IPR055265">
    <property type="entry name" value="Photo_RC_L/M_CS"/>
</dbReference>
<dbReference type="InterPro" id="IPR005867">
    <property type="entry name" value="PSII_D1"/>
</dbReference>
<dbReference type="NCBIfam" id="TIGR01151">
    <property type="entry name" value="psbA"/>
    <property type="match status" value="1"/>
</dbReference>
<dbReference type="PANTHER" id="PTHR33149:SF12">
    <property type="entry name" value="PHOTOSYSTEM II D2 PROTEIN"/>
    <property type="match status" value="1"/>
</dbReference>
<dbReference type="PANTHER" id="PTHR33149">
    <property type="entry name" value="PHOTOSYSTEM II PROTEIN D1"/>
    <property type="match status" value="1"/>
</dbReference>
<dbReference type="Pfam" id="PF00124">
    <property type="entry name" value="Photo_RC"/>
    <property type="match status" value="1"/>
</dbReference>
<dbReference type="PRINTS" id="PR00256">
    <property type="entry name" value="REACTNCENTRE"/>
</dbReference>
<dbReference type="SUPFAM" id="SSF81483">
    <property type="entry name" value="Bacterial photosystem II reaction centre, L and M subunits"/>
    <property type="match status" value="1"/>
</dbReference>
<dbReference type="PROSITE" id="PS00244">
    <property type="entry name" value="REACTION_CENTER"/>
    <property type="match status" value="1"/>
</dbReference>
<protein>
    <recommendedName>
        <fullName evidence="1">Photosystem II protein D1 1</fullName>
        <shortName evidence="1">PSII D1 protein 1</shortName>
        <ecNumber evidence="1">1.10.3.9</ecNumber>
    </recommendedName>
    <alternativeName>
        <fullName evidence="1">Photosystem II Q(B) protein 1</fullName>
    </alternativeName>
</protein>
<accession>Q0I7J2</accession>
<proteinExistence type="inferred from homology"/>
<sequence length="359" mass="39419">MTTTIQQRSGANGWQQFCDWVTSTNNRLYVGWFGVLMIPTLLAATTCFIVAFIAAPPVDIDGIREPVAGSLMYGNNIISGAVVPSSNAIGLHFYPIWEAASLDEWLYNGGPFQLVVFHFLIGIYAYMGREWELSYRLGMRPWICVAYSAPVAAASAVFLVYPFGQGSFSDAMPLGISGTFNYMLVFQAEHNILMHPFHMLGVAGVFGGSLFSAMHGSLVTSSLVRETTETESQNYGYKFGQEEETYNIVAAHGYFGRLIFQYASFNNSRSLHFFLAAWPVVGIWFTALGVSTMAFNLNGFNFNQSILDGQGRVLNTWADVLNRAGLGMEVMHERNAHNFPLDLAAAESTPVALQAPAIG</sequence>
<feature type="chain" id="PRO_0000316386" description="Photosystem II protein D1 1" evidence="1">
    <location>
        <begin position="1"/>
        <end position="344"/>
    </location>
</feature>
<feature type="propeptide" id="PRO_0000316387" evidence="1">
    <location>
        <begin position="345"/>
        <end position="359"/>
    </location>
</feature>
<feature type="transmembrane region" description="Helical" evidence="1">
    <location>
        <begin position="29"/>
        <end position="46"/>
    </location>
</feature>
<feature type="transmembrane region" description="Helical" evidence="1">
    <location>
        <begin position="118"/>
        <end position="133"/>
    </location>
</feature>
<feature type="transmembrane region" description="Helical" evidence="1">
    <location>
        <begin position="142"/>
        <end position="156"/>
    </location>
</feature>
<feature type="transmembrane region" description="Helical" evidence="1">
    <location>
        <begin position="197"/>
        <end position="218"/>
    </location>
</feature>
<feature type="transmembrane region" description="Helical" evidence="1">
    <location>
        <begin position="274"/>
        <end position="288"/>
    </location>
</feature>
<feature type="binding site" description="axial binding residue" evidence="1">
    <location>
        <position position="118"/>
    </location>
    <ligand>
        <name>chlorophyll a</name>
        <dbReference type="ChEBI" id="CHEBI:58416"/>
        <label>ChlzD1</label>
    </ligand>
    <ligandPart>
        <name>Mg</name>
        <dbReference type="ChEBI" id="CHEBI:25107"/>
    </ligandPart>
</feature>
<feature type="binding site" evidence="1">
    <location>
        <position position="126"/>
    </location>
    <ligand>
        <name>pheophytin a</name>
        <dbReference type="ChEBI" id="CHEBI:136840"/>
        <label>D1</label>
    </ligand>
</feature>
<feature type="binding site" evidence="1">
    <location>
        <position position="170"/>
    </location>
    <ligand>
        <name>[CaMn4O5] cluster</name>
        <dbReference type="ChEBI" id="CHEBI:189552"/>
    </ligand>
</feature>
<feature type="binding site" evidence="1">
    <location>
        <position position="189"/>
    </location>
    <ligand>
        <name>[CaMn4O5] cluster</name>
        <dbReference type="ChEBI" id="CHEBI:189552"/>
    </ligand>
</feature>
<feature type="binding site" description="axial binding residue" evidence="1">
    <location>
        <position position="198"/>
    </location>
    <ligand>
        <name>chlorophyll a</name>
        <dbReference type="ChEBI" id="CHEBI:58416"/>
        <label>PD1</label>
    </ligand>
    <ligandPart>
        <name>Mg</name>
        <dbReference type="ChEBI" id="CHEBI:25107"/>
    </ligandPart>
</feature>
<feature type="binding site" evidence="1">
    <location>
        <position position="215"/>
    </location>
    <ligand>
        <name>a quinone</name>
        <dbReference type="ChEBI" id="CHEBI:132124"/>
        <label>B</label>
    </ligand>
</feature>
<feature type="binding site" evidence="1">
    <location>
        <position position="215"/>
    </location>
    <ligand>
        <name>Fe cation</name>
        <dbReference type="ChEBI" id="CHEBI:24875"/>
        <note>ligand shared with heterodimeric partner</note>
    </ligand>
</feature>
<feature type="binding site" evidence="1">
    <location>
        <begin position="264"/>
        <end position="265"/>
    </location>
    <ligand>
        <name>a quinone</name>
        <dbReference type="ChEBI" id="CHEBI:132124"/>
        <label>B</label>
    </ligand>
</feature>
<feature type="binding site" evidence="1">
    <location>
        <position position="272"/>
    </location>
    <ligand>
        <name>Fe cation</name>
        <dbReference type="ChEBI" id="CHEBI:24875"/>
        <note>ligand shared with heterodimeric partner</note>
    </ligand>
</feature>
<feature type="binding site" evidence="1">
    <location>
        <position position="332"/>
    </location>
    <ligand>
        <name>[CaMn4O5] cluster</name>
        <dbReference type="ChEBI" id="CHEBI:189552"/>
    </ligand>
</feature>
<feature type="binding site" evidence="1">
    <location>
        <position position="333"/>
    </location>
    <ligand>
        <name>[CaMn4O5] cluster</name>
        <dbReference type="ChEBI" id="CHEBI:189552"/>
    </ligand>
</feature>
<feature type="binding site" evidence="1">
    <location>
        <position position="342"/>
    </location>
    <ligand>
        <name>[CaMn4O5] cluster</name>
        <dbReference type="ChEBI" id="CHEBI:189552"/>
    </ligand>
</feature>
<feature type="binding site" evidence="1">
    <location>
        <position position="344"/>
    </location>
    <ligand>
        <name>[CaMn4O5] cluster</name>
        <dbReference type="ChEBI" id="CHEBI:189552"/>
    </ligand>
</feature>
<feature type="site" description="Tyrosine radical intermediate" evidence="1">
    <location>
        <position position="161"/>
    </location>
</feature>
<feature type="site" description="Stabilizes free radical intermediate" evidence="1">
    <location>
        <position position="190"/>
    </location>
</feature>
<feature type="site" description="Cleavage; by CtpA" evidence="1">
    <location>
        <begin position="344"/>
        <end position="345"/>
    </location>
</feature>
<organism>
    <name type="scientific">Synechococcus sp. (strain CC9311)</name>
    <dbReference type="NCBI Taxonomy" id="64471"/>
    <lineage>
        <taxon>Bacteria</taxon>
        <taxon>Bacillati</taxon>
        <taxon>Cyanobacteriota</taxon>
        <taxon>Cyanophyceae</taxon>
        <taxon>Synechococcales</taxon>
        <taxon>Synechococcaceae</taxon>
        <taxon>Synechococcus</taxon>
    </lineage>
</organism>
<keyword id="KW-0106">Calcium</keyword>
<keyword id="KW-0148">Chlorophyll</keyword>
<keyword id="KW-0157">Chromophore</keyword>
<keyword id="KW-0249">Electron transport</keyword>
<keyword id="KW-0359">Herbicide resistance</keyword>
<keyword id="KW-0408">Iron</keyword>
<keyword id="KW-0460">Magnesium</keyword>
<keyword id="KW-0464">Manganese</keyword>
<keyword id="KW-0472">Membrane</keyword>
<keyword id="KW-0479">Metal-binding</keyword>
<keyword id="KW-0560">Oxidoreductase</keyword>
<keyword id="KW-0602">Photosynthesis</keyword>
<keyword id="KW-0604">Photosystem II</keyword>
<keyword id="KW-1185">Reference proteome</keyword>
<keyword id="KW-0793">Thylakoid</keyword>
<keyword id="KW-0812">Transmembrane</keyword>
<keyword id="KW-1133">Transmembrane helix</keyword>
<keyword id="KW-0813">Transport</keyword>
<gene>
    <name evidence="1 2" type="primary">psbA1</name>
    <name type="ordered locus">sync_0368</name>
</gene>
<gene>
    <name evidence="1 2" type="primary">psbA4</name>
    <name type="ordered locus">sync_2384</name>
</gene>
<comment type="function">
    <text evidence="1">Photosystem II (PSII) is a light-driven water:plastoquinone oxidoreductase that uses light energy to abstract electrons from H(2)O, generating O(2) and a proton gradient subsequently used for ATP formation. It consists of a core antenna complex that captures photons, and an electron transfer chain that converts photonic excitation into a charge separation. The D1/D2 (PsbA/PsbD) reaction center heterodimer binds P680, the primary electron donor of PSII as well as several subsequent electron acceptors.</text>
</comment>
<comment type="catalytic activity">
    <reaction evidence="1">
        <text>2 a plastoquinone + 4 hnu + 2 H2O = 2 a plastoquinol + O2</text>
        <dbReference type="Rhea" id="RHEA:36359"/>
        <dbReference type="Rhea" id="RHEA-COMP:9561"/>
        <dbReference type="Rhea" id="RHEA-COMP:9562"/>
        <dbReference type="ChEBI" id="CHEBI:15377"/>
        <dbReference type="ChEBI" id="CHEBI:15379"/>
        <dbReference type="ChEBI" id="CHEBI:17757"/>
        <dbReference type="ChEBI" id="CHEBI:30212"/>
        <dbReference type="ChEBI" id="CHEBI:62192"/>
        <dbReference type="EC" id="1.10.3.9"/>
    </reaction>
</comment>
<comment type="cofactor">
    <text evidence="1">The D1/D2 heterodimer binds P680, chlorophylls that are the primary electron donor of PSII, and subsequent electron acceptors. It shares a non-heme iron and each subunit binds pheophytin, quinone, additional chlorophylls, carotenoids and lipids. D1 provides most of the ligands for the Mn4-Ca-O5 cluster of the oxygen-evolving complex (OEC). There is also a Cl(-1) ion associated with D1 and D2, which is required for oxygen evolution. The PSII complex binds additional chlorophylls, carotenoids and specific lipids.</text>
</comment>
<comment type="subunit">
    <text evidence="1">PSII is composed of 1 copy each of membrane proteins PsbA, PsbB, PsbC, PsbD, PsbE, PsbF, PsbH, PsbI, PsbJ, PsbK, PsbL, PsbM, PsbT, PsbX, PsbY, PsbZ, Psb30/Ycf12, peripheral proteins PsbO, CyanoQ (PsbQ), PsbU, PsbV and a large number of cofactors. It forms dimeric complexes.</text>
</comment>
<comment type="subcellular location">
    <subcellularLocation>
        <location evidence="1">Cellular thylakoid membrane</location>
        <topology evidence="1">Multi-pass membrane protein</topology>
    </subcellularLocation>
</comment>
<comment type="PTM">
    <text evidence="1">Tyr-161 forms a radical intermediate that is referred to as redox-active TyrZ, YZ or Y-Z.</text>
</comment>
<comment type="PTM">
    <text evidence="1">C-terminally processed by CtpA; processing is essential to allow assembly of the oxygen-evolving complex and thus photosynthetic growth.</text>
</comment>
<comment type="miscellaneous">
    <text evidence="1">Cyanobacteria usually contain more than 2 copies of the psbA gene.</text>
</comment>
<comment type="miscellaneous">
    <text evidence="1">2 of the reaction center chlorophylls (ChlD1 and ChlD2) are entirely coordinated by water.</text>
</comment>
<comment type="miscellaneous">
    <text evidence="1">Herbicides such as atrazine, BNT, diuron or ioxynil bind in the Q(B) binding site and block subsequent electron transfer.</text>
</comment>
<comment type="similarity">
    <text evidence="1">Belongs to the reaction center PufL/M/PsbA/D family.</text>
</comment>